<accession>Q5E0F2</accession>
<name>MSBA_ALIF1</name>
<organism>
    <name type="scientific">Aliivibrio fischeri (strain ATCC 700601 / ES114)</name>
    <name type="common">Vibrio fischeri</name>
    <dbReference type="NCBI Taxonomy" id="312309"/>
    <lineage>
        <taxon>Bacteria</taxon>
        <taxon>Pseudomonadati</taxon>
        <taxon>Pseudomonadota</taxon>
        <taxon>Gammaproteobacteria</taxon>
        <taxon>Vibrionales</taxon>
        <taxon>Vibrionaceae</taxon>
        <taxon>Aliivibrio</taxon>
    </lineage>
</organism>
<evidence type="ECO:0000255" key="1">
    <source>
        <dbReference type="HAMAP-Rule" id="MF_01703"/>
    </source>
</evidence>
<gene>
    <name evidence="1" type="primary">msbA</name>
    <name type="ordered locus">VF_A0424</name>
</gene>
<comment type="function">
    <text evidence="1">Involved in lipopolysaccharide (LPS) biosynthesis. Translocates lipid A-core from the inner to the outer leaflet of the inner membrane. Transmembrane domains (TMD) form a pore in the inner membrane and the ATP-binding domain (NBD) is responsible for energy generation.</text>
</comment>
<comment type="catalytic activity">
    <reaction evidence="1">
        <text>ATP + H2O + lipid A-core oligosaccharideSide 1 = ADP + phosphate + lipid A-core oligosaccharideSide 2.</text>
        <dbReference type="EC" id="7.5.2.6"/>
    </reaction>
</comment>
<comment type="subunit">
    <text evidence="1">Homodimer.</text>
</comment>
<comment type="subcellular location">
    <subcellularLocation>
        <location evidence="1">Cell inner membrane</location>
        <topology evidence="1">Multi-pass membrane protein</topology>
    </subcellularLocation>
</comment>
<comment type="domain">
    <text evidence="1">In MsbA the ATP-binding domain (NBD) and the transmembrane domain (TMD) are fused.</text>
</comment>
<comment type="similarity">
    <text evidence="1">Belongs to the ABC transporter superfamily. Lipid exporter (TC 3.A.1.106) family.</text>
</comment>
<proteinExistence type="inferred from homology"/>
<reference key="1">
    <citation type="journal article" date="2005" name="Proc. Natl. Acad. Sci. U.S.A.">
        <title>Complete genome sequence of Vibrio fischeri: a symbiotic bacterium with pathogenic congeners.</title>
        <authorList>
            <person name="Ruby E.G."/>
            <person name="Urbanowski M."/>
            <person name="Campbell J."/>
            <person name="Dunn A."/>
            <person name="Faini M."/>
            <person name="Gunsalus R."/>
            <person name="Lostroh P."/>
            <person name="Lupp C."/>
            <person name="McCann J."/>
            <person name="Millikan D."/>
            <person name="Schaefer A."/>
            <person name="Stabb E."/>
            <person name="Stevens A."/>
            <person name="Visick K."/>
            <person name="Whistler C."/>
            <person name="Greenberg E.P."/>
        </authorList>
    </citation>
    <scope>NUCLEOTIDE SEQUENCE [LARGE SCALE GENOMIC DNA]</scope>
    <source>
        <strain>ATCC 700601 / ES114</strain>
    </source>
</reference>
<keyword id="KW-0067">ATP-binding</keyword>
<keyword id="KW-0997">Cell inner membrane</keyword>
<keyword id="KW-1003">Cell membrane</keyword>
<keyword id="KW-0445">Lipid transport</keyword>
<keyword id="KW-0472">Membrane</keyword>
<keyword id="KW-0547">Nucleotide-binding</keyword>
<keyword id="KW-1185">Reference proteome</keyword>
<keyword id="KW-1278">Translocase</keyword>
<keyword id="KW-0812">Transmembrane</keyword>
<keyword id="KW-1133">Transmembrane helix</keyword>
<keyword id="KW-0813">Transport</keyword>
<feature type="chain" id="PRO_0000271663" description="ATP-dependent lipid A-core flippase">
    <location>
        <begin position="1"/>
        <end position="582"/>
    </location>
</feature>
<feature type="transmembrane region" description="Helical" evidence="1">
    <location>
        <begin position="16"/>
        <end position="36"/>
    </location>
</feature>
<feature type="transmembrane region" description="Helical" evidence="1">
    <location>
        <begin position="69"/>
        <end position="89"/>
    </location>
</feature>
<feature type="transmembrane region" description="Helical" evidence="1">
    <location>
        <begin position="153"/>
        <end position="173"/>
    </location>
</feature>
<feature type="transmembrane region" description="Helical" evidence="1">
    <location>
        <begin position="250"/>
        <end position="270"/>
    </location>
</feature>
<feature type="transmembrane region" description="Helical" evidence="1">
    <location>
        <begin position="275"/>
        <end position="295"/>
    </location>
</feature>
<feature type="domain" description="ABC transmembrane type-1" evidence="1">
    <location>
        <begin position="29"/>
        <end position="310"/>
    </location>
</feature>
<feature type="domain" description="ABC transporter" evidence="1">
    <location>
        <begin position="342"/>
        <end position="578"/>
    </location>
</feature>
<feature type="binding site" evidence="1">
    <location>
        <begin position="376"/>
        <end position="383"/>
    </location>
    <ligand>
        <name>ATP</name>
        <dbReference type="ChEBI" id="CHEBI:30616"/>
    </ligand>
</feature>
<sequence length="582" mass="64115">MTIEKDESTWATFKRLWPHISLYKAGLGVAVVALVINALSDTYMISLLKPLLDEGFGSADSDFLKKMPFIILAMMFIRGLSGFVSGYCMSWVASNVVMRIRRQIFNHFMHMPVSYFDQESTGRLLSRITYDSEQVAAATSKALVNIVRESASIIGLLGLMFWNSWQLSLVLVVIAPVVAFAISNVSKRFRKISKNMQTAMGSLTATSEQMLKGHKVVLSYGGQKVESERFDNISNHMRQQNMKMVVAQGLANPIIQMIASFALVTVLYLASVDSIKETLTPGTFTVVFSAMFGLLRPLKGLTSVTSDFQRGMAACQTLFELMDMDKEKDDGTIEKDTVKGDIKVDNVTFTYPTADGPALRNVSFDLPAGKTIALVGRSGSGKSTIANLFTRFYDVDSGEISLDGDKIEDYRLPNLRKHFALVSQNVHLFNDTVANNIAYASEGKFTRLEIEKAAELAYASDFINKMDDGFDTMIGENGASLSGGQRQRIAIARALLQNAPVLILDEATSALDTESEKAIQSALDELQKDKTVLVIAHRLSTIEDADQILVVDEGEVVERGNHAELIAHDGAYAQLHRIQFGD</sequence>
<protein>
    <recommendedName>
        <fullName evidence="1">ATP-dependent lipid A-core flippase</fullName>
        <ecNumber evidence="1">7.5.2.6</ecNumber>
    </recommendedName>
    <alternativeName>
        <fullName evidence="1">Lipid A export ATP-binding/permease protein MsbA</fullName>
    </alternativeName>
</protein>
<dbReference type="EC" id="7.5.2.6" evidence="1"/>
<dbReference type="EMBL" id="CP000021">
    <property type="protein sequence ID" value="AAW87494.1"/>
    <property type="molecule type" value="Genomic_DNA"/>
</dbReference>
<dbReference type="RefSeq" id="WP_011263297.1">
    <property type="nucleotide sequence ID" value="NZ_CAWLES010000002.1"/>
</dbReference>
<dbReference type="RefSeq" id="YP_206382.1">
    <property type="nucleotide sequence ID" value="NC_006841.2"/>
</dbReference>
<dbReference type="SMR" id="Q5E0F2"/>
<dbReference type="STRING" id="312309.VF_A0424"/>
<dbReference type="EnsemblBacteria" id="AAW87494">
    <property type="protein sequence ID" value="AAW87494"/>
    <property type="gene ID" value="VF_A0424"/>
</dbReference>
<dbReference type="GeneID" id="54165750"/>
<dbReference type="KEGG" id="vfi:VF_A0424"/>
<dbReference type="PATRIC" id="fig|312309.11.peg.3029"/>
<dbReference type="eggNOG" id="COG1132">
    <property type="taxonomic scope" value="Bacteria"/>
</dbReference>
<dbReference type="HOGENOM" id="CLU_000604_84_3_6"/>
<dbReference type="OrthoDB" id="9806127at2"/>
<dbReference type="Proteomes" id="UP000000537">
    <property type="component" value="Chromosome II"/>
</dbReference>
<dbReference type="GO" id="GO:0005886">
    <property type="term" value="C:plasma membrane"/>
    <property type="evidence" value="ECO:0007669"/>
    <property type="project" value="UniProtKB-SubCell"/>
</dbReference>
<dbReference type="GO" id="GO:0015421">
    <property type="term" value="F:ABC-type oligopeptide transporter activity"/>
    <property type="evidence" value="ECO:0007669"/>
    <property type="project" value="TreeGrafter"/>
</dbReference>
<dbReference type="GO" id="GO:0005524">
    <property type="term" value="F:ATP binding"/>
    <property type="evidence" value="ECO:0007669"/>
    <property type="project" value="UniProtKB-KW"/>
</dbReference>
<dbReference type="GO" id="GO:0016887">
    <property type="term" value="F:ATP hydrolysis activity"/>
    <property type="evidence" value="ECO:0007669"/>
    <property type="project" value="InterPro"/>
</dbReference>
<dbReference type="GO" id="GO:0034040">
    <property type="term" value="F:ATPase-coupled lipid transmembrane transporter activity"/>
    <property type="evidence" value="ECO:0007669"/>
    <property type="project" value="InterPro"/>
</dbReference>
<dbReference type="CDD" id="cd18552">
    <property type="entry name" value="ABC_6TM_MsbA_like"/>
    <property type="match status" value="1"/>
</dbReference>
<dbReference type="CDD" id="cd03251">
    <property type="entry name" value="ABCC_MsbA"/>
    <property type="match status" value="1"/>
</dbReference>
<dbReference type="FunFam" id="3.40.50.300:FF:000140">
    <property type="entry name" value="Lipid A export ATP-binding/permease protein MsbA"/>
    <property type="match status" value="1"/>
</dbReference>
<dbReference type="Gene3D" id="1.20.1560.10">
    <property type="entry name" value="ABC transporter type 1, transmembrane domain"/>
    <property type="match status" value="1"/>
</dbReference>
<dbReference type="Gene3D" id="3.40.50.300">
    <property type="entry name" value="P-loop containing nucleotide triphosphate hydrolases"/>
    <property type="match status" value="1"/>
</dbReference>
<dbReference type="InterPro" id="IPR003593">
    <property type="entry name" value="AAA+_ATPase"/>
</dbReference>
<dbReference type="InterPro" id="IPR011527">
    <property type="entry name" value="ABC1_TM_dom"/>
</dbReference>
<dbReference type="InterPro" id="IPR036640">
    <property type="entry name" value="ABC1_TM_sf"/>
</dbReference>
<dbReference type="InterPro" id="IPR003439">
    <property type="entry name" value="ABC_transporter-like_ATP-bd"/>
</dbReference>
<dbReference type="InterPro" id="IPR017871">
    <property type="entry name" value="ABC_transporter-like_CS"/>
</dbReference>
<dbReference type="InterPro" id="IPR011917">
    <property type="entry name" value="ABC_transpr_lipidA"/>
</dbReference>
<dbReference type="InterPro" id="IPR027417">
    <property type="entry name" value="P-loop_NTPase"/>
</dbReference>
<dbReference type="InterPro" id="IPR039421">
    <property type="entry name" value="Type_1_exporter"/>
</dbReference>
<dbReference type="NCBIfam" id="TIGR02203">
    <property type="entry name" value="MsbA_lipidA"/>
    <property type="match status" value="1"/>
</dbReference>
<dbReference type="NCBIfam" id="NF008381">
    <property type="entry name" value="PRK11176.1"/>
    <property type="match status" value="1"/>
</dbReference>
<dbReference type="PANTHER" id="PTHR43394:SF1">
    <property type="entry name" value="ATP-BINDING CASSETTE SUB-FAMILY B MEMBER 10, MITOCHONDRIAL"/>
    <property type="match status" value="1"/>
</dbReference>
<dbReference type="PANTHER" id="PTHR43394">
    <property type="entry name" value="ATP-DEPENDENT PERMEASE MDL1, MITOCHONDRIAL"/>
    <property type="match status" value="1"/>
</dbReference>
<dbReference type="Pfam" id="PF00664">
    <property type="entry name" value="ABC_membrane"/>
    <property type="match status" value="1"/>
</dbReference>
<dbReference type="Pfam" id="PF00005">
    <property type="entry name" value="ABC_tran"/>
    <property type="match status" value="1"/>
</dbReference>
<dbReference type="SMART" id="SM00382">
    <property type="entry name" value="AAA"/>
    <property type="match status" value="1"/>
</dbReference>
<dbReference type="SUPFAM" id="SSF90123">
    <property type="entry name" value="ABC transporter transmembrane region"/>
    <property type="match status" value="1"/>
</dbReference>
<dbReference type="SUPFAM" id="SSF52540">
    <property type="entry name" value="P-loop containing nucleoside triphosphate hydrolases"/>
    <property type="match status" value="1"/>
</dbReference>
<dbReference type="PROSITE" id="PS50929">
    <property type="entry name" value="ABC_TM1F"/>
    <property type="match status" value="1"/>
</dbReference>
<dbReference type="PROSITE" id="PS00211">
    <property type="entry name" value="ABC_TRANSPORTER_1"/>
    <property type="match status" value="1"/>
</dbReference>
<dbReference type="PROSITE" id="PS50893">
    <property type="entry name" value="ABC_TRANSPORTER_2"/>
    <property type="match status" value="1"/>
</dbReference>
<dbReference type="PROSITE" id="PS51239">
    <property type="entry name" value="MSBA"/>
    <property type="match status" value="1"/>
</dbReference>